<comment type="function">
    <text evidence="1 4">Component of the velvet transcription factor complex that controls sexual/asexual developmental ratio in response to light, promoting sexual development in the darkness while stimulating asexual sporulation under illumination (By similarity). The velvet complex acts as a global regulator for secondary metabolite gene expression (By similarity). Component of the RYP2-RYP3 heterodimeric complex that plays a dual role in activating genes associated with spore maturation and repressing certain development-associated genes (By similarity). The complex binds DNA through the DNA-binding domain of RYP2 that recognizes an 11-nucleotide consensus sequence 5'-CTGGCCGCGGC-3' consisting of two motifs in the promoters of key developmental regulatory genes (By similarity). Required for viable spore production and regulation of sporulation in response to temperature, as well as for the switch to yeast-form in the presence of host cells (PubMed:18791067).</text>
</comment>
<comment type="subunit">
    <text evidence="1">Component of the heterotrimeric velvet complex composed of LAE1, VEL1 and VEL2; VEL1A acting as a bridging protein between LAE1 and VEL2 (By similarity). Forms a heterodimeric complex with VOS1; the formation of the VEL2-VOS1 complex is light-dependent (By similarity).</text>
</comment>
<comment type="interaction">
    <interactant intactId="EBI-16068767">
        <id>B2CQK1</id>
    </interactant>
    <interactant intactId="EBI-16068756">
        <id>B2CQK0</id>
        <label>RYP2</label>
    </interactant>
    <organismsDiffer>false</organismsDiffer>
    <experiments>4</experiments>
</comment>
<comment type="subcellular location">
    <subcellularLocation>
        <location evidence="1">Nucleus</location>
    </subcellularLocation>
    <subcellularLocation>
        <location evidence="1">Cytoplasm</location>
    </subcellularLocation>
    <text evidence="1">Nuclear localization is mediated by VEL1 (By similarity).</text>
</comment>
<comment type="induction">
    <text evidence="4">Expression is increased at higher temperature (37 degrees Celsius) (PubMed:18791067).</text>
</comment>
<comment type="disruption phenotype">
    <text evidence="4">Leads to predominant production of large tuberculate spores with severe viability defects (PubMed:18791067).</text>
</comment>
<comment type="similarity">
    <text evidence="5">Belongs to the velvet family. VelB subfamily.</text>
</comment>
<dbReference type="EMBL" id="EU543496">
    <property type="protein sequence ID" value="ACB59237.1"/>
    <property type="molecule type" value="Genomic_DNA"/>
</dbReference>
<dbReference type="SMR" id="B2CQK1"/>
<dbReference type="DIP" id="DIP-60480N"/>
<dbReference type="IntAct" id="B2CQK1">
    <property type="interactions" value="2"/>
</dbReference>
<dbReference type="GO" id="GO:0005737">
    <property type="term" value="C:cytoplasm"/>
    <property type="evidence" value="ECO:0007669"/>
    <property type="project" value="UniProtKB-SubCell"/>
</dbReference>
<dbReference type="GO" id="GO:0005634">
    <property type="term" value="C:nucleus"/>
    <property type="evidence" value="ECO:0007669"/>
    <property type="project" value="UniProtKB-SubCell"/>
</dbReference>
<dbReference type="GO" id="GO:0030435">
    <property type="term" value="P:sporulation resulting in formation of a cellular spore"/>
    <property type="evidence" value="ECO:0007669"/>
    <property type="project" value="UniProtKB-KW"/>
</dbReference>
<dbReference type="Gene3D" id="2.60.40.3960">
    <property type="entry name" value="Velvet domain"/>
    <property type="match status" value="2"/>
</dbReference>
<dbReference type="InterPro" id="IPR021740">
    <property type="entry name" value="Velvet"/>
</dbReference>
<dbReference type="InterPro" id="IPR037525">
    <property type="entry name" value="Velvet_dom"/>
</dbReference>
<dbReference type="InterPro" id="IPR038491">
    <property type="entry name" value="Velvet_dom_sf"/>
</dbReference>
<dbReference type="PANTHER" id="PTHR33572">
    <property type="entry name" value="SPORE DEVELOPMENT REGULATOR VOSA"/>
    <property type="match status" value="1"/>
</dbReference>
<dbReference type="PANTHER" id="PTHR33572:SF3">
    <property type="entry name" value="VELVET COMPLEX SUBUNIT B"/>
    <property type="match status" value="1"/>
</dbReference>
<dbReference type="Pfam" id="PF11754">
    <property type="entry name" value="Velvet"/>
    <property type="match status" value="1"/>
</dbReference>
<dbReference type="PROSITE" id="PS51821">
    <property type="entry name" value="VELVET"/>
    <property type="match status" value="1"/>
</dbReference>
<feature type="chain" id="PRO_0000435786" description="Velvet complex subunit RYP3">
    <location>
        <begin position="1"/>
        <end position="373"/>
    </location>
</feature>
<feature type="domain" description="Velvet" evidence="2">
    <location>
        <begin position="48"/>
        <end position="344"/>
    </location>
</feature>
<feature type="region of interest" description="Disordered" evidence="3">
    <location>
        <begin position="1"/>
        <end position="26"/>
    </location>
</feature>
<feature type="region of interest" description="Disordered" evidence="3">
    <location>
        <begin position="344"/>
        <end position="373"/>
    </location>
</feature>
<feature type="compositionally biased region" description="Basic and acidic residues" evidence="3">
    <location>
        <begin position="1"/>
        <end position="10"/>
    </location>
</feature>
<feature type="compositionally biased region" description="Acidic residues" evidence="3">
    <location>
        <begin position="364"/>
        <end position="373"/>
    </location>
</feature>
<evidence type="ECO:0000250" key="1">
    <source>
        <dbReference type="UniProtKB" id="C8VTS4"/>
    </source>
</evidence>
<evidence type="ECO:0000255" key="2">
    <source>
        <dbReference type="PROSITE-ProRule" id="PRU01165"/>
    </source>
</evidence>
<evidence type="ECO:0000256" key="3">
    <source>
        <dbReference type="SAM" id="MobiDB-lite"/>
    </source>
</evidence>
<evidence type="ECO:0000269" key="4">
    <source>
    </source>
</evidence>
<evidence type="ECO:0000305" key="5"/>
<sequence length="373" mass="40230">MYTLKQDRPHPVPPPPPLTMDHLQHGYSTNTPVTLPGIPEAARSVSTVYEGRIYSLDVVQQPIRARMCGFGDKDRRPLTPPPCIRLIVRDATTQKEIDINEIDTSFYVLTVDLWNAEGTSEVNLVRHSATSPSISTATSSAYPPPANIMPFPQYAQTHGYPQTAYPPYYGGQPGYNPHAGYQYPQGGPDPYYPGLPAASTYYPPGTPTQALGPQSALGPHISSASTGMFTRNLIGSLSASAFRLTDPDDKIGVWFVLQDLSVRTEGSFRLKMNFVNVGTQSQAQDQSPGGTPSSPVINVGSAPVLASAFSEVFQVYSAKKFPGVIESTPLSKCFAFQGIKIPIRKDGVKGPRGGQSHGSKGQDGEGEDWENEG</sequence>
<gene>
    <name type="primary">RYP3</name>
</gene>
<keyword id="KW-0963">Cytoplasm</keyword>
<keyword id="KW-0539">Nucleus</keyword>
<keyword id="KW-0749">Sporulation</keyword>
<keyword id="KW-0804">Transcription</keyword>
<keyword id="KW-0805">Transcription regulation</keyword>
<proteinExistence type="evidence at protein level"/>
<protein>
    <recommendedName>
        <fullName evidence="5">Velvet complex subunit RYP3</fullName>
    </recommendedName>
</protein>
<name>VELB_AJECA</name>
<organism>
    <name type="scientific">Ajellomyces capsulatus</name>
    <name type="common">Darling's disease fungus</name>
    <name type="synonym">Histoplasma capsulatum</name>
    <dbReference type="NCBI Taxonomy" id="5037"/>
    <lineage>
        <taxon>Eukaryota</taxon>
        <taxon>Fungi</taxon>
        <taxon>Dikarya</taxon>
        <taxon>Ascomycota</taxon>
        <taxon>Pezizomycotina</taxon>
        <taxon>Eurotiomycetes</taxon>
        <taxon>Eurotiomycetidae</taxon>
        <taxon>Onygenales</taxon>
        <taxon>Ajellomycetaceae</taxon>
        <taxon>Histoplasma</taxon>
    </lineage>
</organism>
<accession>B2CQK1</accession>
<reference key="1">
    <citation type="journal article" date="2008" name="Proc. Natl. Acad. Sci. U.S.A.">
        <title>Conserved factors Ryp2 and Ryp3 control cell morphology and infectious spore formation in the fungal pathogen Histoplasma capsulatum.</title>
        <authorList>
            <person name="Webster R.H."/>
            <person name="Sil A."/>
        </authorList>
    </citation>
    <scope>NUCLEOTIDE SEQUENCE [GENOMIC DNA]</scope>
    <scope>INDUCTION</scope>
    <scope>FUNCTION</scope>
    <scope>DISRUPTION PHENOTYPE</scope>
    <source>
        <strain>ATCC 26032 / G217B</strain>
    </source>
</reference>